<organism>
    <name type="scientific">Homo sapiens</name>
    <name type="common">Human</name>
    <dbReference type="NCBI Taxonomy" id="9606"/>
    <lineage>
        <taxon>Eukaryota</taxon>
        <taxon>Metazoa</taxon>
        <taxon>Chordata</taxon>
        <taxon>Craniata</taxon>
        <taxon>Vertebrata</taxon>
        <taxon>Euteleostomi</taxon>
        <taxon>Mammalia</taxon>
        <taxon>Eutheria</taxon>
        <taxon>Euarchontoglires</taxon>
        <taxon>Primates</taxon>
        <taxon>Haplorrhini</taxon>
        <taxon>Catarrhini</taxon>
        <taxon>Hominidae</taxon>
        <taxon>Homo</taxon>
    </lineage>
</organism>
<name>TM250_HUMAN</name>
<evidence type="ECO:0000255" key="1"/>
<evidence type="ECO:0000269" key="2">
    <source>
    </source>
</evidence>
<evidence type="ECO:0000303" key="3">
    <source>
    </source>
</evidence>
<evidence type="ECO:0000305" key="4"/>
<evidence type="ECO:0000312" key="5">
    <source>
        <dbReference type="HGNC" id="HGNC:31009"/>
    </source>
</evidence>
<accession>H0YL14</accession>
<sequence>MPVMPIPRRVRSFHGPHTTCLHAACGPVRASHLARTKYNNFDVYIKTRWLYGFIRFLLYFSCSLFTAALWGALAALFCLQYLGVRVLLRFQRKLSVLLLLLGRRRVDFRLVNELLVYGIHVTMLLVGGLGWCFMVFVDM</sequence>
<reference key="1">
    <citation type="journal article" date="2004" name="Nature">
        <title>DNA sequence and analysis of human chromosome 9.</title>
        <authorList>
            <person name="Humphray S.J."/>
            <person name="Oliver K."/>
            <person name="Hunt A.R."/>
            <person name="Plumb R.W."/>
            <person name="Loveland J.E."/>
            <person name="Howe K.L."/>
            <person name="Andrews T.D."/>
            <person name="Searle S."/>
            <person name="Hunt S.E."/>
            <person name="Scott C.E."/>
            <person name="Jones M.C."/>
            <person name="Ainscough R."/>
            <person name="Almeida J.P."/>
            <person name="Ambrose K.D."/>
            <person name="Ashwell R.I.S."/>
            <person name="Babbage A.K."/>
            <person name="Babbage S."/>
            <person name="Bagguley C.L."/>
            <person name="Bailey J."/>
            <person name="Banerjee R."/>
            <person name="Barker D.J."/>
            <person name="Barlow K.F."/>
            <person name="Bates K."/>
            <person name="Beasley H."/>
            <person name="Beasley O."/>
            <person name="Bird C.P."/>
            <person name="Bray-Allen S."/>
            <person name="Brown A.J."/>
            <person name="Brown J.Y."/>
            <person name="Burford D."/>
            <person name="Burrill W."/>
            <person name="Burton J."/>
            <person name="Carder C."/>
            <person name="Carter N.P."/>
            <person name="Chapman J.C."/>
            <person name="Chen Y."/>
            <person name="Clarke G."/>
            <person name="Clark S.Y."/>
            <person name="Clee C.M."/>
            <person name="Clegg S."/>
            <person name="Collier R.E."/>
            <person name="Corby N."/>
            <person name="Crosier M."/>
            <person name="Cummings A.T."/>
            <person name="Davies J."/>
            <person name="Dhami P."/>
            <person name="Dunn M."/>
            <person name="Dutta I."/>
            <person name="Dyer L.W."/>
            <person name="Earthrowl M.E."/>
            <person name="Faulkner L."/>
            <person name="Fleming C.J."/>
            <person name="Frankish A."/>
            <person name="Frankland J.A."/>
            <person name="French L."/>
            <person name="Fricker D.G."/>
            <person name="Garner P."/>
            <person name="Garnett J."/>
            <person name="Ghori J."/>
            <person name="Gilbert J.G.R."/>
            <person name="Glison C."/>
            <person name="Grafham D.V."/>
            <person name="Gribble S."/>
            <person name="Griffiths C."/>
            <person name="Griffiths-Jones S."/>
            <person name="Grocock R."/>
            <person name="Guy J."/>
            <person name="Hall R.E."/>
            <person name="Hammond S."/>
            <person name="Harley J.L."/>
            <person name="Harrison E.S.I."/>
            <person name="Hart E.A."/>
            <person name="Heath P.D."/>
            <person name="Henderson C.D."/>
            <person name="Hopkins B.L."/>
            <person name="Howard P.J."/>
            <person name="Howden P.J."/>
            <person name="Huckle E."/>
            <person name="Johnson C."/>
            <person name="Johnson D."/>
            <person name="Joy A.A."/>
            <person name="Kay M."/>
            <person name="Keenan S."/>
            <person name="Kershaw J.K."/>
            <person name="Kimberley A.M."/>
            <person name="King A."/>
            <person name="Knights A."/>
            <person name="Laird G.K."/>
            <person name="Langford C."/>
            <person name="Lawlor S."/>
            <person name="Leongamornlert D.A."/>
            <person name="Leversha M."/>
            <person name="Lloyd C."/>
            <person name="Lloyd D.M."/>
            <person name="Lovell J."/>
            <person name="Martin S."/>
            <person name="Mashreghi-Mohammadi M."/>
            <person name="Matthews L."/>
            <person name="McLaren S."/>
            <person name="McLay K.E."/>
            <person name="McMurray A."/>
            <person name="Milne S."/>
            <person name="Nickerson T."/>
            <person name="Nisbett J."/>
            <person name="Nordsiek G."/>
            <person name="Pearce A.V."/>
            <person name="Peck A.I."/>
            <person name="Porter K.M."/>
            <person name="Pandian R."/>
            <person name="Pelan S."/>
            <person name="Phillimore B."/>
            <person name="Povey S."/>
            <person name="Ramsey Y."/>
            <person name="Rand V."/>
            <person name="Scharfe M."/>
            <person name="Sehra H.K."/>
            <person name="Shownkeen R."/>
            <person name="Sims S.K."/>
            <person name="Skuce C.D."/>
            <person name="Smith M."/>
            <person name="Steward C.A."/>
            <person name="Swarbreck D."/>
            <person name="Sycamore N."/>
            <person name="Tester J."/>
            <person name="Thorpe A."/>
            <person name="Tracey A."/>
            <person name="Tromans A."/>
            <person name="Thomas D.W."/>
            <person name="Wall M."/>
            <person name="Wallis J.M."/>
            <person name="West A.P."/>
            <person name="Whitehead S.L."/>
            <person name="Willey D.L."/>
            <person name="Williams S.A."/>
            <person name="Wilming L."/>
            <person name="Wray P.W."/>
            <person name="Young L."/>
            <person name="Ashurst J.L."/>
            <person name="Coulson A."/>
            <person name="Blocker H."/>
            <person name="Durbin R.M."/>
            <person name="Sulston J.E."/>
            <person name="Hubbard T."/>
            <person name="Jackson M.J."/>
            <person name="Bentley D.R."/>
            <person name="Beck S."/>
            <person name="Rogers J."/>
            <person name="Dunham I."/>
        </authorList>
    </citation>
    <scope>NUCLEOTIDE SEQUENCE [LARGE SCALE GENOMIC DNA]</scope>
</reference>
<reference key="2">
    <citation type="journal article" date="2004" name="Genome Res.">
        <title>The status, quality, and expansion of the NIH full-length cDNA project: the Mammalian Gene Collection (MGC).</title>
        <authorList>
            <consortium name="The MGC Project Team"/>
        </authorList>
    </citation>
    <scope>NUCLEOTIDE SEQUENCE [LARGE SCALE MRNA]</scope>
    <source>
        <tissue>Lung</tissue>
    </source>
</reference>
<reference key="3">
    <citation type="journal article" date="2011" name="Zhongguo Bing Du Xue">
        <title>Host cell protein C9orf69 promotes viral proliferation via interaction with HSV-1 UL25 protein.</title>
        <authorList>
            <person name="Zhang Y."/>
            <person name="Li Y.M."/>
            <person name="Liu L.D."/>
            <person name="Jiang L."/>
            <person name="Ji M."/>
            <person name="Jiang R.J."/>
            <person name="Guo L."/>
            <person name="Liao Y."/>
            <person name="Li Q.H."/>
        </authorList>
    </citation>
    <scope>FUNCTION</scope>
    <scope>FUNCTION (MICROBIAL INFECTION)</scope>
    <scope>INTERACTION WITH HHV-1 PROTEIN UL25 (MICROBIAL INFECTION)</scope>
    <scope>INDUCTION</scope>
    <scope>SUBCELLULAR LOCATION</scope>
</reference>
<keyword id="KW-0131">Cell cycle</keyword>
<keyword id="KW-0963">Cytoplasm</keyword>
<keyword id="KW-0945">Host-virus interaction</keyword>
<keyword id="KW-0472">Membrane</keyword>
<keyword id="KW-0539">Nucleus</keyword>
<keyword id="KW-1267">Proteomics identification</keyword>
<keyword id="KW-1185">Reference proteome</keyword>
<keyword id="KW-0812">Transmembrane</keyword>
<keyword id="KW-1133">Transmembrane helix</keyword>
<dbReference type="EMBL" id="AL138781">
    <property type="status" value="NOT_ANNOTATED_CDS"/>
    <property type="molecule type" value="Genomic_DNA"/>
</dbReference>
<dbReference type="EMBL" id="BC014304">
    <property type="status" value="NOT_ANNOTATED_CDS"/>
    <property type="molecule type" value="mRNA"/>
</dbReference>
<dbReference type="CCDS" id="CCDS59155.1"/>
<dbReference type="RefSeq" id="NP_001243455.1">
    <property type="nucleotide sequence ID" value="NM_001256526.2"/>
</dbReference>
<dbReference type="RefSeq" id="NP_690046.3">
    <property type="nucleotide sequence ID" value="NM_152833.2"/>
</dbReference>
<dbReference type="RefSeq" id="XP_024303480.1">
    <property type="nucleotide sequence ID" value="XM_024447712.2"/>
</dbReference>
<dbReference type="RefSeq" id="XP_054220120.1">
    <property type="nucleotide sequence ID" value="XM_054364145.1"/>
</dbReference>
<dbReference type="BioGRID" id="124664">
    <property type="interactions" value="1"/>
</dbReference>
<dbReference type="FunCoup" id="H0YL14">
    <property type="interactions" value="277"/>
</dbReference>
<dbReference type="IntAct" id="H0YL14">
    <property type="interactions" value="2"/>
</dbReference>
<dbReference type="STRING" id="9606.ENSP00000453019"/>
<dbReference type="BioMuta" id="TMEM250"/>
<dbReference type="jPOST" id="H0YL14"/>
<dbReference type="MassIVE" id="H0YL14"/>
<dbReference type="PaxDb" id="9606-ENSP00000453019"/>
<dbReference type="PeptideAtlas" id="H0YL14"/>
<dbReference type="ProteomicsDB" id="39818"/>
<dbReference type="Antibodypedia" id="76948">
    <property type="antibodies" value="4 antibodies from 4 providers"/>
</dbReference>
<dbReference type="DNASU" id="90120"/>
<dbReference type="Ensembl" id="ENST00000418388.6">
    <property type="protein sequence ID" value="ENSP00000453019.1"/>
    <property type="gene ID" value="ENSG00000238227.8"/>
</dbReference>
<dbReference type="Ensembl" id="ENST00000557985.2">
    <property type="protein sequence ID" value="ENSP00000457272.1"/>
    <property type="gene ID" value="ENSG00000238227.8"/>
</dbReference>
<dbReference type="Ensembl" id="ENST00000561457.2">
    <property type="protein sequence ID" value="ENSP00000452750.2"/>
    <property type="gene ID" value="ENSG00000238227.8"/>
</dbReference>
<dbReference type="GeneID" id="90120"/>
<dbReference type="KEGG" id="hsa:90120"/>
<dbReference type="MANE-Select" id="ENST00000418388.6">
    <property type="protein sequence ID" value="ENSP00000453019.1"/>
    <property type="RefSeq nucleotide sequence ID" value="NM_152833.3"/>
    <property type="RefSeq protein sequence ID" value="NP_690046.3"/>
</dbReference>
<dbReference type="UCSC" id="uc004cgx.6">
    <property type="organism name" value="human"/>
</dbReference>
<dbReference type="AGR" id="HGNC:31009"/>
<dbReference type="CTD" id="90120"/>
<dbReference type="GeneCards" id="TMEM250"/>
<dbReference type="HGNC" id="HGNC:31009">
    <property type="gene designation" value="TMEM250"/>
</dbReference>
<dbReference type="HPA" id="ENSG00000238227">
    <property type="expression patterns" value="Low tissue specificity"/>
</dbReference>
<dbReference type="neXtProt" id="NX_H0YL14"/>
<dbReference type="OpenTargets" id="ENSG00000238227"/>
<dbReference type="VEuPathDB" id="HostDB:ENSG00000238227"/>
<dbReference type="eggNOG" id="KOG2655">
    <property type="taxonomic scope" value="Eukaryota"/>
</dbReference>
<dbReference type="GeneTree" id="ENSGT00560000078707"/>
<dbReference type="HOGENOM" id="CLU_1844448_0_0_1"/>
<dbReference type="InParanoid" id="H0YL14"/>
<dbReference type="OMA" id="HVTMFLV"/>
<dbReference type="OrthoDB" id="10013139at2759"/>
<dbReference type="PAN-GO" id="H0YL14">
    <property type="GO annotations" value="9 GO annotations based on evolutionary models"/>
</dbReference>
<dbReference type="PathwayCommons" id="H0YL14"/>
<dbReference type="SignaLink" id="H0YL14"/>
<dbReference type="BioGRID-ORCS" id="90120">
    <property type="hits" value="16 hits in 1133 CRISPR screens"/>
</dbReference>
<dbReference type="ChiTaRS" id="C9orf69">
    <property type="organism name" value="human"/>
</dbReference>
<dbReference type="GenomeRNAi" id="90120"/>
<dbReference type="Pharos" id="H0YL14">
    <property type="development level" value="Tdark"/>
</dbReference>
<dbReference type="PRO" id="PR:H0YL14"/>
<dbReference type="Proteomes" id="UP000005640">
    <property type="component" value="Chromosome 9"/>
</dbReference>
<dbReference type="RNAct" id="H0YL14">
    <property type="molecule type" value="protein"/>
</dbReference>
<dbReference type="Bgee" id="ENSG00000238227">
    <property type="expression patterns" value="Expressed in granulocyte and 155 other cell types or tissues"/>
</dbReference>
<dbReference type="ExpressionAtlas" id="H0YL14">
    <property type="expression patterns" value="baseline and differential"/>
</dbReference>
<dbReference type="GO" id="GO:0005737">
    <property type="term" value="C:cytoplasm"/>
    <property type="evidence" value="ECO:0000314"/>
    <property type="project" value="UniProtKB"/>
</dbReference>
<dbReference type="GO" id="GO:0016020">
    <property type="term" value="C:membrane"/>
    <property type="evidence" value="ECO:0007669"/>
    <property type="project" value="UniProtKB-SubCell"/>
</dbReference>
<dbReference type="GO" id="GO:0005654">
    <property type="term" value="C:nucleoplasm"/>
    <property type="evidence" value="ECO:0000314"/>
    <property type="project" value="HPA"/>
</dbReference>
<dbReference type="GO" id="GO:0005634">
    <property type="term" value="C:nucleus"/>
    <property type="evidence" value="ECO:0000314"/>
    <property type="project" value="UniProtKB"/>
</dbReference>
<dbReference type="GO" id="GO:0008284">
    <property type="term" value="P:positive regulation of cell population proliferation"/>
    <property type="evidence" value="ECO:0000314"/>
    <property type="project" value="UniProtKB"/>
</dbReference>
<dbReference type="GO" id="GO:0048524">
    <property type="term" value="P:positive regulation of viral process"/>
    <property type="evidence" value="ECO:0000314"/>
    <property type="project" value="UniProtKB"/>
</dbReference>
<dbReference type="InterPro" id="IPR041156">
    <property type="entry name" value="TM250"/>
</dbReference>
<dbReference type="PANTHER" id="PTHR48431">
    <property type="entry name" value="TRANSMEMBRANE PROTEIN 250"/>
    <property type="match status" value="1"/>
</dbReference>
<dbReference type="PANTHER" id="PTHR48431:SF1">
    <property type="entry name" value="TRANSMEMBRANE PROTEIN 250"/>
    <property type="match status" value="1"/>
</dbReference>
<dbReference type="Pfam" id="PF17685">
    <property type="entry name" value="TM250"/>
    <property type="match status" value="1"/>
</dbReference>
<feature type="chain" id="PRO_0000420906" description="Transmembrane protein 250">
    <location>
        <begin position="1"/>
        <end position="139"/>
    </location>
</feature>
<feature type="transmembrane region" description="Helical" evidence="1">
    <location>
        <begin position="56"/>
        <end position="76"/>
    </location>
</feature>
<feature type="transmembrane region" description="Helical" evidence="1">
    <location>
        <begin position="116"/>
        <end position="136"/>
    </location>
</feature>
<protein>
    <recommendedName>
        <fullName evidence="5">Transmembrane protein 250</fullName>
    </recommendedName>
    <alternativeName>
        <fullName evidence="3">Herpes virus UL25-binding protein</fullName>
    </alternativeName>
</protein>
<proteinExistence type="evidence at protein level"/>
<gene>
    <name evidence="5" type="primary">TMEM250</name>
    <name type="synonym">C9orf69</name>
</gene>
<comment type="function">
    <text evidence="2">May play a role in cell proliferation by promoting progression into S phase.</text>
</comment>
<comment type="function">
    <text evidence="2">(Microbial infection) Promotes human herpes simplex virus 1/HHV-1 proliferation.</text>
</comment>
<comment type="subunit">
    <text evidence="2">(Microbial infection) Interacts with herpes simplex virus 1/HHV-1 protein CVC2/UL25.</text>
</comment>
<comment type="interaction">
    <interactant intactId="EBI-6399705">
        <id>H0YL14</id>
    </interactant>
    <interactant intactId="EBI-6449813">
        <id>D3YP88</id>
        <label>UL25</label>
    </interactant>
    <organismsDiffer>true</organismsDiffer>
    <experiments>3</experiments>
</comment>
<comment type="subcellular location">
    <subcellularLocation>
        <location evidence="4">Membrane</location>
        <topology evidence="4">Multi-pass membrane protein</topology>
    </subcellularLocation>
    <subcellularLocation>
        <location evidence="2">Nucleus</location>
    </subcellularLocation>
    <subcellularLocation>
        <location evidence="2">Cytoplasm</location>
    </subcellularLocation>
    <text>Upon HHV-1 infection, accumulates arround the nuclear membrane and translocates into the nucleus.</text>
</comment>
<comment type="induction">
    <text evidence="2">Up-regulated upon HHV-1 infection.</text>
</comment>